<proteinExistence type="evidence at protein level"/>
<organism>
    <name type="scientific">Rattus norvegicus</name>
    <name type="common">Rat</name>
    <dbReference type="NCBI Taxonomy" id="10116"/>
    <lineage>
        <taxon>Eukaryota</taxon>
        <taxon>Metazoa</taxon>
        <taxon>Chordata</taxon>
        <taxon>Craniata</taxon>
        <taxon>Vertebrata</taxon>
        <taxon>Euteleostomi</taxon>
        <taxon>Mammalia</taxon>
        <taxon>Eutheria</taxon>
        <taxon>Euarchontoglires</taxon>
        <taxon>Glires</taxon>
        <taxon>Rodentia</taxon>
        <taxon>Myomorpha</taxon>
        <taxon>Muroidea</taxon>
        <taxon>Muridae</taxon>
        <taxon>Murinae</taxon>
        <taxon>Rattus</taxon>
    </lineage>
</organism>
<evidence type="ECO:0000250" key="1"/>
<evidence type="ECO:0000255" key="2"/>
<evidence type="ECO:0000255" key="3">
    <source>
        <dbReference type="PROSITE-ProRule" id="PRU00059"/>
    </source>
</evidence>
<evidence type="ECO:0000255" key="4">
    <source>
        <dbReference type="PROSITE-ProRule" id="PRU00124"/>
    </source>
</evidence>
<evidence type="ECO:0000256" key="5">
    <source>
        <dbReference type="SAM" id="MobiDB-lite"/>
    </source>
</evidence>
<evidence type="ECO:0000305" key="6"/>
<keyword id="KW-0168">Coated pit</keyword>
<keyword id="KW-1015">Disulfide bond</keyword>
<keyword id="KW-0254">Endocytosis</keyword>
<keyword id="KW-0325">Glycoprotein</keyword>
<keyword id="KW-0472">Membrane</keyword>
<keyword id="KW-0675">Receptor</keyword>
<keyword id="KW-1185">Reference proteome</keyword>
<keyword id="KW-0677">Repeat</keyword>
<keyword id="KW-0732">Signal</keyword>
<keyword id="KW-0812">Transmembrane</keyword>
<keyword id="KW-1133">Transmembrane helix</keyword>
<comment type="function">
    <text evidence="1">Probable receptor, which may be involved in the internalization of lipophilic molecules and/or signal transduction. Its precise role is however unclear, since it does not bind to very low density lipoprotein (VLDL) or to LRPAP1 in vitro (By similarity).</text>
</comment>
<comment type="subunit">
    <text>Binds GGA1 and GGA2.</text>
</comment>
<comment type="subcellular location">
    <subcellularLocation>
        <location evidence="6">Membrane</location>
        <topology evidence="6">Single-pass type I membrane protein</topology>
    </subcellularLocation>
    <subcellularLocation>
        <location evidence="1">Membrane</location>
        <location evidence="1">Coated pit</location>
    </subcellularLocation>
</comment>
<comment type="similarity">
    <text evidence="6">Belongs to the LDLR family.</text>
</comment>
<feature type="signal peptide" evidence="2">
    <location>
        <begin position="1"/>
        <end position="36"/>
    </location>
</feature>
<feature type="chain" id="PRO_0000017324" description="Low-density lipoprotein receptor-related protein 3">
    <location>
        <begin position="37"/>
        <end position="770"/>
    </location>
</feature>
<feature type="topological domain" description="Extracellular" evidence="2">
    <location>
        <begin position="37"/>
        <end position="496"/>
    </location>
</feature>
<feature type="transmembrane region" description="Helical" evidence="2">
    <location>
        <begin position="497"/>
        <end position="517"/>
    </location>
</feature>
<feature type="topological domain" description="Cytoplasmic" evidence="2">
    <location>
        <begin position="518"/>
        <end position="770"/>
    </location>
</feature>
<feature type="domain" description="CUB 1" evidence="3">
    <location>
        <begin position="43"/>
        <end position="159"/>
    </location>
</feature>
<feature type="domain" description="LDL-receptor class A 1" evidence="4">
    <location>
        <begin position="165"/>
        <end position="201"/>
    </location>
</feature>
<feature type="domain" description="LDL-receptor class A 2" evidence="4">
    <location>
        <begin position="211"/>
        <end position="250"/>
    </location>
</feature>
<feature type="domain" description="CUB 2" evidence="3">
    <location>
        <begin position="254"/>
        <end position="365"/>
    </location>
</feature>
<feature type="domain" description="LDL-receptor class A 3" evidence="4">
    <location>
        <begin position="415"/>
        <end position="453"/>
    </location>
</feature>
<feature type="domain" description="LDL-receptor class A 4" evidence="4">
    <location>
        <begin position="454"/>
        <end position="490"/>
    </location>
</feature>
<feature type="region of interest" description="Disordered" evidence="5">
    <location>
        <begin position="639"/>
        <end position="753"/>
    </location>
</feature>
<feature type="compositionally biased region" description="Basic and acidic residues" evidence="5">
    <location>
        <begin position="689"/>
        <end position="703"/>
    </location>
</feature>
<feature type="glycosylation site" description="N-linked (GlcNAc...) asparagine" evidence="2">
    <location>
        <position position="71"/>
    </location>
</feature>
<feature type="glycosylation site" description="N-linked (GlcNAc...) asparagine" evidence="2">
    <location>
        <position position="199"/>
    </location>
</feature>
<feature type="glycosylation site" description="N-linked (GlcNAc...) asparagine" evidence="2">
    <location>
        <position position="359"/>
    </location>
</feature>
<feature type="disulfide bond" evidence="1">
    <location>
        <begin position="43"/>
        <end position="72"/>
    </location>
</feature>
<feature type="disulfide bond" evidence="1">
    <location>
        <begin position="99"/>
        <end position="120"/>
    </location>
</feature>
<feature type="disulfide bond" evidence="1">
    <location>
        <begin position="166"/>
        <end position="178"/>
    </location>
</feature>
<feature type="disulfide bond" evidence="1">
    <location>
        <begin position="173"/>
        <end position="191"/>
    </location>
</feature>
<feature type="disulfide bond" evidence="1">
    <location>
        <begin position="185"/>
        <end position="200"/>
    </location>
</feature>
<feature type="disulfide bond" evidence="1">
    <location>
        <begin position="212"/>
        <end position="227"/>
    </location>
</feature>
<feature type="disulfide bond" evidence="1">
    <location>
        <begin position="219"/>
        <end position="240"/>
    </location>
</feature>
<feature type="disulfide bond" evidence="1">
    <location>
        <begin position="234"/>
        <end position="249"/>
    </location>
</feature>
<feature type="disulfide bond" evidence="1">
    <location>
        <begin position="254"/>
        <end position="282"/>
    </location>
</feature>
<feature type="disulfide bond" evidence="1">
    <location>
        <begin position="416"/>
        <end position="430"/>
    </location>
</feature>
<feature type="disulfide bond" evidence="1">
    <location>
        <begin position="423"/>
        <end position="443"/>
    </location>
</feature>
<feature type="disulfide bond" evidence="1">
    <location>
        <begin position="437"/>
        <end position="452"/>
    </location>
</feature>
<feature type="disulfide bond" evidence="1">
    <location>
        <begin position="455"/>
        <end position="467"/>
    </location>
</feature>
<feature type="disulfide bond" evidence="1">
    <location>
        <begin position="462"/>
        <end position="480"/>
    </location>
</feature>
<feature type="disulfide bond" evidence="1">
    <location>
        <begin position="474"/>
        <end position="489"/>
    </location>
</feature>
<sequence>MEKRAAAGPEGAPGARAPLAVVCLVNLFLTGRLSSAVPALAACSGKLEQHTERRGVIYSPAWPLNYPPGTNCSWYIQGDRGDMITISFRNFDVEESHQCSLDWLLLGPAAPPRQEAFRLCGSAIPPAFISARDHVWIFFHSDASSSGQAQGFRLSYIRGKLGQASCQTDEFRCDNGKCLPGPWQCNMVDECGDGSDEGNCSAPASEPPGSLCPGGTFPCSGARSTRCLPVERRCDGTQDCGDGSDEAGCPDLACGRRLGSFYGSFASPDLFGAARGPSDLHCTWLVDTQDPRRVLLQLELRLGYDDYVQVYEGLGERGDRLLQTLSYRSNHRPVSLEAAQGRLTVAYHARARSAGHGFNATYQVKGYCLPWEQPCGSSSEGDDGSTGEQGCFSEPQRCDGWWHCASGRDEQGCPACPPDQYPCEGGSGLCYAPADRCNNQKSCPDGADEKNCFSCQPGTFHCGTNLCIFETWRCDGQEDCQDGSDEHGCLAAVPRKVITAALIGSLVCGLLLVIALGCAFKLYSLRTQEYRAFETQMTRLEAEFVRREAPPSYGQLIAQGLIPPVEDFPVYSASQASVLQNLRTAMRRQMRRHASRRGPSRRRLGRLWNRLFHRPRAPRGQIPLLTAARTSQTVLGDGLLQAAPGPVPDPPVPNTDTGSPREAGDGPPSGSGHAPEVGPSVPPPPLNLRDPEYRPEDKERKACVDPLEDSPAPVDTPPEPCLAQDPHPQTPTASGIQDPHSAEPLGVCRSPPPTCSPILEASDDEALLVC</sequence>
<accession>O88204</accession>
<dbReference type="EMBL" id="AB009463">
    <property type="protein sequence ID" value="BAA32331.1"/>
    <property type="molecule type" value="mRNA"/>
</dbReference>
<dbReference type="PIR" id="T00203">
    <property type="entry name" value="T00203"/>
</dbReference>
<dbReference type="RefSeq" id="NP_445993.1">
    <property type="nucleotide sequence ID" value="NM_053541.2"/>
</dbReference>
<dbReference type="FunCoup" id="O88204">
    <property type="interactions" value="1245"/>
</dbReference>
<dbReference type="STRING" id="10116.ENSRNOP00000015384"/>
<dbReference type="GlyCosmos" id="O88204">
    <property type="glycosylation" value="3 sites, No reported glycans"/>
</dbReference>
<dbReference type="GlyGen" id="O88204">
    <property type="glycosylation" value="3 sites"/>
</dbReference>
<dbReference type="PhosphoSitePlus" id="O88204"/>
<dbReference type="PaxDb" id="10116-ENSRNOP00000015384"/>
<dbReference type="GeneID" id="89787"/>
<dbReference type="KEGG" id="rno:89787"/>
<dbReference type="UCSC" id="RGD:619729">
    <property type="organism name" value="rat"/>
</dbReference>
<dbReference type="AGR" id="RGD:619729"/>
<dbReference type="CTD" id="4037"/>
<dbReference type="RGD" id="619729">
    <property type="gene designation" value="Lrp3"/>
</dbReference>
<dbReference type="VEuPathDB" id="HostDB:ENSRNOG00000011451"/>
<dbReference type="eggNOG" id="KOG1215">
    <property type="taxonomic scope" value="Eukaryota"/>
</dbReference>
<dbReference type="HOGENOM" id="CLU_013747_1_0_1"/>
<dbReference type="InParanoid" id="O88204"/>
<dbReference type="OrthoDB" id="10020456at2759"/>
<dbReference type="PRO" id="PR:O88204"/>
<dbReference type="Proteomes" id="UP000002494">
    <property type="component" value="Chromosome 1"/>
</dbReference>
<dbReference type="Bgee" id="ENSRNOG00000011451">
    <property type="expression patterns" value="Expressed in liver and 18 other cell types or tissues"/>
</dbReference>
<dbReference type="GO" id="GO:0005905">
    <property type="term" value="C:clathrin-coated pit"/>
    <property type="evidence" value="ECO:0007669"/>
    <property type="project" value="UniProtKB-KW"/>
</dbReference>
<dbReference type="GO" id="GO:0005886">
    <property type="term" value="C:plasma membrane"/>
    <property type="evidence" value="ECO:0000318"/>
    <property type="project" value="GO_Central"/>
</dbReference>
<dbReference type="GO" id="GO:0006897">
    <property type="term" value="P:endocytosis"/>
    <property type="evidence" value="ECO:0007669"/>
    <property type="project" value="UniProtKB-KW"/>
</dbReference>
<dbReference type="GO" id="GO:0045599">
    <property type="term" value="P:negative regulation of fat cell differentiation"/>
    <property type="evidence" value="ECO:0000266"/>
    <property type="project" value="RGD"/>
</dbReference>
<dbReference type="GO" id="GO:0010629">
    <property type="term" value="P:negative regulation of gene expression"/>
    <property type="evidence" value="ECO:0000266"/>
    <property type="project" value="RGD"/>
</dbReference>
<dbReference type="GO" id="GO:0010628">
    <property type="term" value="P:positive regulation of gene expression"/>
    <property type="evidence" value="ECO:0000266"/>
    <property type="project" value="RGD"/>
</dbReference>
<dbReference type="GO" id="GO:0045669">
    <property type="term" value="P:positive regulation of osteoblast differentiation"/>
    <property type="evidence" value="ECO:0000266"/>
    <property type="project" value="RGD"/>
</dbReference>
<dbReference type="CDD" id="cd00041">
    <property type="entry name" value="CUB"/>
    <property type="match status" value="2"/>
</dbReference>
<dbReference type="CDD" id="cd00112">
    <property type="entry name" value="LDLa"/>
    <property type="match status" value="4"/>
</dbReference>
<dbReference type="FunFam" id="4.10.400.10:FF:000055">
    <property type="entry name" value="Low-density lipoprotein receptor-related protein 10"/>
    <property type="match status" value="1"/>
</dbReference>
<dbReference type="FunFam" id="4.10.400.10:FF:000050">
    <property type="entry name" value="low-density lipoprotein receptor-related protein 10"/>
    <property type="match status" value="1"/>
</dbReference>
<dbReference type="FunFam" id="2.60.120.290:FF:000021">
    <property type="entry name" value="Low-density lipoprotein receptor-related protein 12"/>
    <property type="match status" value="1"/>
</dbReference>
<dbReference type="FunFam" id="4.10.400.10:FF:000034">
    <property type="entry name" value="Low-density lipoprotein receptor-related protein 2"/>
    <property type="match status" value="1"/>
</dbReference>
<dbReference type="FunFam" id="2.60.120.290:FF:000031">
    <property type="entry name" value="Low-density lipoprotein receptor-related protein 3"/>
    <property type="match status" value="1"/>
</dbReference>
<dbReference type="FunFam" id="4.10.400.10:FF:000089">
    <property type="entry name" value="Low-density lipoprotein receptor-related protein 3"/>
    <property type="match status" value="1"/>
</dbReference>
<dbReference type="Gene3D" id="4.10.400.10">
    <property type="entry name" value="Low-density Lipoprotein Receptor"/>
    <property type="match status" value="4"/>
</dbReference>
<dbReference type="Gene3D" id="2.60.120.290">
    <property type="entry name" value="Spermadhesin, CUB domain"/>
    <property type="match status" value="2"/>
</dbReference>
<dbReference type="InterPro" id="IPR000859">
    <property type="entry name" value="CUB_dom"/>
</dbReference>
<dbReference type="InterPro" id="IPR036055">
    <property type="entry name" value="LDL_receptor-like_sf"/>
</dbReference>
<dbReference type="InterPro" id="IPR050685">
    <property type="entry name" value="LDLR"/>
</dbReference>
<dbReference type="InterPro" id="IPR023415">
    <property type="entry name" value="LDLR_class-A_CS"/>
</dbReference>
<dbReference type="InterPro" id="IPR002172">
    <property type="entry name" value="LDrepeatLR_classA_rpt"/>
</dbReference>
<dbReference type="InterPro" id="IPR035914">
    <property type="entry name" value="Sperma_CUB_dom_sf"/>
</dbReference>
<dbReference type="PANTHER" id="PTHR24270">
    <property type="entry name" value="LOW-DENSITY LIPOPROTEIN RECEPTOR-RELATED"/>
    <property type="match status" value="1"/>
</dbReference>
<dbReference type="Pfam" id="PF00431">
    <property type="entry name" value="CUB"/>
    <property type="match status" value="1"/>
</dbReference>
<dbReference type="Pfam" id="PF00057">
    <property type="entry name" value="Ldl_recept_a"/>
    <property type="match status" value="3"/>
</dbReference>
<dbReference type="PRINTS" id="PR00261">
    <property type="entry name" value="LDLRECEPTOR"/>
</dbReference>
<dbReference type="SMART" id="SM00042">
    <property type="entry name" value="CUB"/>
    <property type="match status" value="2"/>
</dbReference>
<dbReference type="SMART" id="SM00192">
    <property type="entry name" value="LDLa"/>
    <property type="match status" value="5"/>
</dbReference>
<dbReference type="SUPFAM" id="SSF57424">
    <property type="entry name" value="LDL receptor-like module"/>
    <property type="match status" value="4"/>
</dbReference>
<dbReference type="SUPFAM" id="SSF49854">
    <property type="entry name" value="Spermadhesin, CUB domain"/>
    <property type="match status" value="2"/>
</dbReference>
<dbReference type="PROSITE" id="PS01180">
    <property type="entry name" value="CUB"/>
    <property type="match status" value="2"/>
</dbReference>
<dbReference type="PROSITE" id="PS01209">
    <property type="entry name" value="LDLRA_1"/>
    <property type="match status" value="3"/>
</dbReference>
<dbReference type="PROSITE" id="PS50068">
    <property type="entry name" value="LDLRA_2"/>
    <property type="match status" value="4"/>
</dbReference>
<reference key="1">
    <citation type="journal article" date="1998" name="Genomics">
        <title>cDNA cloning of a new low-density lipoprotein receptor-related protein and mapping of its gene (LRP3) to chromosome bands 19q12-q13. 2.</title>
        <authorList>
            <person name="Ishii H."/>
            <person name="Kim D.-H."/>
            <person name="Fujita T."/>
            <person name="Endo Y."/>
            <person name="Saeki S."/>
            <person name="Yamamoto T.T."/>
        </authorList>
    </citation>
    <scope>NUCLEOTIDE SEQUENCE [MRNA]</scope>
</reference>
<reference key="2">
    <citation type="journal article" date="2001" name="J. Biol. Chem.">
        <title>Golgi-localizing, gamma-adaptin ear homology domain, ADP-ribosylation factor-binding (GGA) proteins interact with acidic dileucine sequences within the cytoplasmic domains of sorting receptors through their Vps27p/Hrs/STAM (VHS) domains.</title>
        <authorList>
            <person name="Takatsu H."/>
            <person name="Katoh Y."/>
            <person name="Shiba Y."/>
            <person name="Nakayama K."/>
        </authorList>
    </citation>
    <scope>INTERACTION WITH GGA1 AND GGA2</scope>
</reference>
<gene>
    <name type="primary">Lrp3</name>
    <name type="synonym">Lrp105</name>
</gene>
<protein>
    <recommendedName>
        <fullName>Low-density lipoprotein receptor-related protein 3</fullName>
        <shortName>LRP-3</shortName>
    </recommendedName>
    <alternativeName>
        <fullName>105 kDa low-density lipoprotein receptor-related protein</fullName>
        <shortName>rLRp105</shortName>
    </alternativeName>
</protein>
<name>LRP3_RAT</name>